<protein>
    <recommendedName>
        <fullName evidence="1">ATP synthase subunit delta</fullName>
    </recommendedName>
    <alternativeName>
        <fullName evidence="1">ATP synthase F(1) sector subunit delta</fullName>
    </alternativeName>
    <alternativeName>
        <fullName evidence="1">F-type ATPase subunit delta</fullName>
        <shortName evidence="1">F-ATPase subunit delta</shortName>
    </alternativeName>
</protein>
<dbReference type="EMBL" id="CP001616">
    <property type="protein sequence ID" value="ACQ94724.1"/>
    <property type="molecule type" value="Genomic_DNA"/>
</dbReference>
<dbReference type="RefSeq" id="WP_015880173.1">
    <property type="nucleotide sequence ID" value="NC_012691.1"/>
</dbReference>
<dbReference type="SMR" id="C4LDW3"/>
<dbReference type="STRING" id="595494.Tola_3136"/>
<dbReference type="KEGG" id="tau:Tola_3136"/>
<dbReference type="eggNOG" id="COG0712">
    <property type="taxonomic scope" value="Bacteria"/>
</dbReference>
<dbReference type="HOGENOM" id="CLU_085114_3_0_6"/>
<dbReference type="OrthoDB" id="9816221at2"/>
<dbReference type="Proteomes" id="UP000009073">
    <property type="component" value="Chromosome"/>
</dbReference>
<dbReference type="GO" id="GO:0005886">
    <property type="term" value="C:plasma membrane"/>
    <property type="evidence" value="ECO:0007669"/>
    <property type="project" value="UniProtKB-SubCell"/>
</dbReference>
<dbReference type="GO" id="GO:0045259">
    <property type="term" value="C:proton-transporting ATP synthase complex"/>
    <property type="evidence" value="ECO:0007669"/>
    <property type="project" value="UniProtKB-KW"/>
</dbReference>
<dbReference type="GO" id="GO:0046933">
    <property type="term" value="F:proton-transporting ATP synthase activity, rotational mechanism"/>
    <property type="evidence" value="ECO:0007669"/>
    <property type="project" value="UniProtKB-UniRule"/>
</dbReference>
<dbReference type="Gene3D" id="1.10.520.20">
    <property type="entry name" value="N-terminal domain of the delta subunit of the F1F0-ATP synthase"/>
    <property type="match status" value="1"/>
</dbReference>
<dbReference type="HAMAP" id="MF_01416">
    <property type="entry name" value="ATP_synth_delta_bact"/>
    <property type="match status" value="1"/>
</dbReference>
<dbReference type="InterPro" id="IPR026015">
    <property type="entry name" value="ATP_synth_OSCP/delta_N_sf"/>
</dbReference>
<dbReference type="InterPro" id="IPR020781">
    <property type="entry name" value="ATPase_OSCP/d_CS"/>
</dbReference>
<dbReference type="InterPro" id="IPR000711">
    <property type="entry name" value="ATPase_OSCP/dsu"/>
</dbReference>
<dbReference type="NCBIfam" id="TIGR01145">
    <property type="entry name" value="ATP_synt_delta"/>
    <property type="match status" value="1"/>
</dbReference>
<dbReference type="NCBIfam" id="NF004402">
    <property type="entry name" value="PRK05758.2-2"/>
    <property type="match status" value="1"/>
</dbReference>
<dbReference type="NCBIfam" id="NF004404">
    <property type="entry name" value="PRK05758.2-5"/>
    <property type="match status" value="1"/>
</dbReference>
<dbReference type="PANTHER" id="PTHR11910">
    <property type="entry name" value="ATP SYNTHASE DELTA CHAIN"/>
    <property type="match status" value="1"/>
</dbReference>
<dbReference type="Pfam" id="PF00213">
    <property type="entry name" value="OSCP"/>
    <property type="match status" value="1"/>
</dbReference>
<dbReference type="PRINTS" id="PR00125">
    <property type="entry name" value="ATPASEDELTA"/>
</dbReference>
<dbReference type="SUPFAM" id="SSF47928">
    <property type="entry name" value="N-terminal domain of the delta subunit of the F1F0-ATP synthase"/>
    <property type="match status" value="1"/>
</dbReference>
<dbReference type="PROSITE" id="PS00389">
    <property type="entry name" value="ATPASE_DELTA"/>
    <property type="match status" value="1"/>
</dbReference>
<proteinExistence type="inferred from homology"/>
<reference key="1">
    <citation type="submission" date="2009-05" db="EMBL/GenBank/DDBJ databases">
        <title>Complete sequence of Tolumonas auensis DSM 9187.</title>
        <authorList>
            <consortium name="US DOE Joint Genome Institute"/>
            <person name="Lucas S."/>
            <person name="Copeland A."/>
            <person name="Lapidus A."/>
            <person name="Glavina del Rio T."/>
            <person name="Tice H."/>
            <person name="Bruce D."/>
            <person name="Goodwin L."/>
            <person name="Pitluck S."/>
            <person name="Chertkov O."/>
            <person name="Brettin T."/>
            <person name="Detter J.C."/>
            <person name="Han C."/>
            <person name="Larimer F."/>
            <person name="Land M."/>
            <person name="Hauser L."/>
            <person name="Kyrpides N."/>
            <person name="Mikhailova N."/>
            <person name="Spring S."/>
            <person name="Beller H."/>
        </authorList>
    </citation>
    <scope>NUCLEOTIDE SEQUENCE [LARGE SCALE GENOMIC DNA]</scope>
    <source>
        <strain>DSM 9187 / NBRC 110442 / TA 4</strain>
    </source>
</reference>
<sequence length="177" mass="19406">MSEVTTIARPYAKAAFDFAVEQKAVDSWLSMLLFAAEVSKDDTVQQVIHSSMAPEQLAQLFNQICGEQLNEQGQNLIRVMAENGRLSVLPAVVAEFSALKAELDKELEAQITSAAALSEAEKVKIQKSLEARYQRTVRLNCQLDPSLMAGLVIKIGDDIIDASVRSKLNRLAEALQS</sequence>
<evidence type="ECO:0000255" key="1">
    <source>
        <dbReference type="HAMAP-Rule" id="MF_01416"/>
    </source>
</evidence>
<name>ATPD_TOLAT</name>
<keyword id="KW-0066">ATP synthesis</keyword>
<keyword id="KW-0997">Cell inner membrane</keyword>
<keyword id="KW-1003">Cell membrane</keyword>
<keyword id="KW-0139">CF(1)</keyword>
<keyword id="KW-0375">Hydrogen ion transport</keyword>
<keyword id="KW-0406">Ion transport</keyword>
<keyword id="KW-0472">Membrane</keyword>
<keyword id="KW-1185">Reference proteome</keyword>
<keyword id="KW-0813">Transport</keyword>
<gene>
    <name evidence="1" type="primary">atpH</name>
    <name type="ordered locus">Tola_3136</name>
</gene>
<accession>C4LDW3</accession>
<organism>
    <name type="scientific">Tolumonas auensis (strain DSM 9187 / NBRC 110442 / TA 4)</name>
    <dbReference type="NCBI Taxonomy" id="595494"/>
    <lineage>
        <taxon>Bacteria</taxon>
        <taxon>Pseudomonadati</taxon>
        <taxon>Pseudomonadota</taxon>
        <taxon>Gammaproteobacteria</taxon>
        <taxon>Aeromonadales</taxon>
        <taxon>Aeromonadaceae</taxon>
        <taxon>Tolumonas</taxon>
    </lineage>
</organism>
<comment type="function">
    <text evidence="1">F(1)F(0) ATP synthase produces ATP from ADP in the presence of a proton or sodium gradient. F-type ATPases consist of two structural domains, F(1) containing the extramembraneous catalytic core and F(0) containing the membrane proton channel, linked together by a central stalk and a peripheral stalk. During catalysis, ATP synthesis in the catalytic domain of F(1) is coupled via a rotary mechanism of the central stalk subunits to proton translocation.</text>
</comment>
<comment type="function">
    <text evidence="1">This protein is part of the stalk that links CF(0) to CF(1). It either transmits conformational changes from CF(0) to CF(1) or is implicated in proton conduction.</text>
</comment>
<comment type="subunit">
    <text evidence="1">F-type ATPases have 2 components, F(1) - the catalytic core - and F(0) - the membrane proton channel. F(1) has five subunits: alpha(3), beta(3), gamma(1), delta(1), epsilon(1). F(0) has three main subunits: a(1), b(2) and c(10-14). The alpha and beta chains form an alternating ring which encloses part of the gamma chain. F(1) is attached to F(0) by a central stalk formed by the gamma and epsilon chains, while a peripheral stalk is formed by the delta and b chains.</text>
</comment>
<comment type="subcellular location">
    <subcellularLocation>
        <location evidence="1">Cell inner membrane</location>
        <topology evidence="1">Peripheral membrane protein</topology>
    </subcellularLocation>
</comment>
<comment type="similarity">
    <text evidence="1">Belongs to the ATPase delta chain family.</text>
</comment>
<feature type="chain" id="PRO_1000215245" description="ATP synthase subunit delta">
    <location>
        <begin position="1"/>
        <end position="177"/>
    </location>
</feature>